<reference key="1">
    <citation type="journal article" date="1996" name="DNA Res.">
        <title>Sequence analysis of the genome of the unicellular cyanobacterium Synechocystis sp. strain PCC6803. II. Sequence determination of the entire genome and assignment of potential protein-coding regions.</title>
        <authorList>
            <person name="Kaneko T."/>
            <person name="Sato S."/>
            <person name="Kotani H."/>
            <person name="Tanaka A."/>
            <person name="Asamizu E."/>
            <person name="Nakamura Y."/>
            <person name="Miyajima N."/>
            <person name="Hirosawa M."/>
            <person name="Sugiura M."/>
            <person name="Sasamoto S."/>
            <person name="Kimura T."/>
            <person name="Hosouchi T."/>
            <person name="Matsuno A."/>
            <person name="Muraki A."/>
            <person name="Nakazaki N."/>
            <person name="Naruo K."/>
            <person name="Okumura S."/>
            <person name="Shimpo S."/>
            <person name="Takeuchi C."/>
            <person name="Wada T."/>
            <person name="Watanabe A."/>
            <person name="Yamada M."/>
            <person name="Yasuda M."/>
            <person name="Tabata S."/>
        </authorList>
    </citation>
    <scope>NUCLEOTIDE SEQUENCE [LARGE SCALE GENOMIC DNA]</scope>
    <source>
        <strain>ATCC 27184 / PCC 6803 / Kazusa</strain>
    </source>
</reference>
<comment type="function">
    <text evidence="1">Essential for recycling GMP and indirectly, cGMP.</text>
</comment>
<comment type="catalytic activity">
    <reaction>
        <text>GMP + ATP = GDP + ADP</text>
        <dbReference type="Rhea" id="RHEA:20780"/>
        <dbReference type="ChEBI" id="CHEBI:30616"/>
        <dbReference type="ChEBI" id="CHEBI:58115"/>
        <dbReference type="ChEBI" id="CHEBI:58189"/>
        <dbReference type="ChEBI" id="CHEBI:456216"/>
        <dbReference type="EC" id="2.7.4.8"/>
    </reaction>
</comment>
<comment type="subcellular location">
    <subcellularLocation>
        <location evidence="1">Cytoplasm</location>
    </subcellularLocation>
</comment>
<comment type="similarity">
    <text evidence="2">Belongs to the guanylate kinase family.</text>
</comment>
<evidence type="ECO:0000250" key="1"/>
<evidence type="ECO:0000305" key="2"/>
<organism>
    <name type="scientific">Synechocystis sp. (strain ATCC 27184 / PCC 6803 / Kazusa)</name>
    <dbReference type="NCBI Taxonomy" id="1111708"/>
    <lineage>
        <taxon>Bacteria</taxon>
        <taxon>Bacillati</taxon>
        <taxon>Cyanobacteriota</taxon>
        <taxon>Cyanophyceae</taxon>
        <taxon>Synechococcales</taxon>
        <taxon>Merismopediaceae</taxon>
        <taxon>Synechocystis</taxon>
    </lineage>
</organism>
<name>KGUA_SYNY3</name>
<feature type="chain" id="PRO_0000170629" description="Guanylate kinase">
    <location>
        <begin position="1"/>
        <end position="191"/>
    </location>
</feature>
<feature type="domain" description="Guanylate kinase-like">
    <location>
        <begin position="10"/>
        <end position="188"/>
    </location>
</feature>
<feature type="binding site" evidence="1">
    <location>
        <begin position="17"/>
        <end position="24"/>
    </location>
    <ligand>
        <name>ATP</name>
        <dbReference type="ChEBI" id="CHEBI:30616"/>
    </ligand>
</feature>
<sequence>MAPDQTSVKGQLIVLTGPSGVGKGTLVQLLLERQPHWFLSISATTRSPRAGEVDGQSYYFLTKEEFQTWIGEEKLLEWAEYAGNYYGTPRQPVEEQIAQGKTVLLEIEVLGARQIKQTFPSARRIFILPPSVEVLEERLRGRGSDSETAIAKRLAQAQQELQAAAEFDYQVVNDDLDQALHRLVKLIGEEE</sequence>
<gene>
    <name type="primary">gmk</name>
    <name type="ordered locus">slr1123</name>
</gene>
<accession>P72648</accession>
<dbReference type="EC" id="2.7.4.8"/>
<dbReference type="EMBL" id="BA000022">
    <property type="protein sequence ID" value="BAA16650.1"/>
    <property type="molecule type" value="Genomic_DNA"/>
</dbReference>
<dbReference type="PIR" id="S74498">
    <property type="entry name" value="S74498"/>
</dbReference>
<dbReference type="SMR" id="P72648"/>
<dbReference type="FunCoup" id="P72648">
    <property type="interactions" value="411"/>
</dbReference>
<dbReference type="STRING" id="1148.gene:10497505"/>
<dbReference type="PaxDb" id="1148-1651722"/>
<dbReference type="EnsemblBacteria" id="BAA16650">
    <property type="protein sequence ID" value="BAA16650"/>
    <property type="gene ID" value="BAA16650"/>
</dbReference>
<dbReference type="KEGG" id="syn:slr1123"/>
<dbReference type="eggNOG" id="COG0194">
    <property type="taxonomic scope" value="Bacteria"/>
</dbReference>
<dbReference type="InParanoid" id="P72648"/>
<dbReference type="PhylomeDB" id="P72648"/>
<dbReference type="Proteomes" id="UP000001425">
    <property type="component" value="Chromosome"/>
</dbReference>
<dbReference type="GO" id="GO:0005829">
    <property type="term" value="C:cytosol"/>
    <property type="evidence" value="ECO:0000318"/>
    <property type="project" value="GO_Central"/>
</dbReference>
<dbReference type="GO" id="GO:0005524">
    <property type="term" value="F:ATP binding"/>
    <property type="evidence" value="ECO:0007669"/>
    <property type="project" value="UniProtKB-UniRule"/>
</dbReference>
<dbReference type="GO" id="GO:0004385">
    <property type="term" value="F:guanylate kinase activity"/>
    <property type="evidence" value="ECO:0000318"/>
    <property type="project" value="GO_Central"/>
</dbReference>
<dbReference type="CDD" id="cd00071">
    <property type="entry name" value="GMPK"/>
    <property type="match status" value="1"/>
</dbReference>
<dbReference type="FunFam" id="3.30.63.10:FF:000002">
    <property type="entry name" value="Guanylate kinase 1"/>
    <property type="match status" value="1"/>
</dbReference>
<dbReference type="Gene3D" id="3.30.63.10">
    <property type="entry name" value="Guanylate Kinase phosphate binding domain"/>
    <property type="match status" value="1"/>
</dbReference>
<dbReference type="Gene3D" id="3.40.50.300">
    <property type="entry name" value="P-loop containing nucleotide triphosphate hydrolases"/>
    <property type="match status" value="1"/>
</dbReference>
<dbReference type="HAMAP" id="MF_00328">
    <property type="entry name" value="Guanylate_kinase"/>
    <property type="match status" value="1"/>
</dbReference>
<dbReference type="InterPro" id="IPR008145">
    <property type="entry name" value="GK/Ca_channel_bsu"/>
</dbReference>
<dbReference type="InterPro" id="IPR008144">
    <property type="entry name" value="Guanylate_kin-like_dom"/>
</dbReference>
<dbReference type="InterPro" id="IPR017665">
    <property type="entry name" value="Guanylate_kinase"/>
</dbReference>
<dbReference type="InterPro" id="IPR020590">
    <property type="entry name" value="Guanylate_kinase_CS"/>
</dbReference>
<dbReference type="InterPro" id="IPR027417">
    <property type="entry name" value="P-loop_NTPase"/>
</dbReference>
<dbReference type="NCBIfam" id="TIGR03263">
    <property type="entry name" value="guanyl_kin"/>
    <property type="match status" value="1"/>
</dbReference>
<dbReference type="PANTHER" id="PTHR23117:SF13">
    <property type="entry name" value="GUANYLATE KINASE"/>
    <property type="match status" value="1"/>
</dbReference>
<dbReference type="PANTHER" id="PTHR23117">
    <property type="entry name" value="GUANYLATE KINASE-RELATED"/>
    <property type="match status" value="1"/>
</dbReference>
<dbReference type="Pfam" id="PF00625">
    <property type="entry name" value="Guanylate_kin"/>
    <property type="match status" value="1"/>
</dbReference>
<dbReference type="SMART" id="SM00072">
    <property type="entry name" value="GuKc"/>
    <property type="match status" value="1"/>
</dbReference>
<dbReference type="SUPFAM" id="SSF52540">
    <property type="entry name" value="P-loop containing nucleoside triphosphate hydrolases"/>
    <property type="match status" value="1"/>
</dbReference>
<dbReference type="PROSITE" id="PS00856">
    <property type="entry name" value="GUANYLATE_KINASE_1"/>
    <property type="match status" value="1"/>
</dbReference>
<dbReference type="PROSITE" id="PS50052">
    <property type="entry name" value="GUANYLATE_KINASE_2"/>
    <property type="match status" value="1"/>
</dbReference>
<protein>
    <recommendedName>
        <fullName>Guanylate kinase</fullName>
        <ecNumber>2.7.4.8</ecNumber>
    </recommendedName>
    <alternativeName>
        <fullName>GMP kinase</fullName>
    </alternativeName>
</protein>
<keyword id="KW-0067">ATP-binding</keyword>
<keyword id="KW-0963">Cytoplasm</keyword>
<keyword id="KW-0418">Kinase</keyword>
<keyword id="KW-0547">Nucleotide-binding</keyword>
<keyword id="KW-1185">Reference proteome</keyword>
<keyword id="KW-0808">Transferase</keyword>
<proteinExistence type="inferred from homology"/>